<proteinExistence type="evidence at protein level"/>
<evidence type="ECO:0000250" key="1">
    <source>
        <dbReference type="UniProtKB" id="P09339"/>
    </source>
</evidence>
<evidence type="ECO:0000250" key="2">
    <source>
        <dbReference type="UniProtKB" id="P36683"/>
    </source>
</evidence>
<evidence type="ECO:0000269" key="3">
    <source>
    </source>
</evidence>
<evidence type="ECO:0000303" key="4">
    <source>
    </source>
</evidence>
<evidence type="ECO:0000305" key="5"/>
<evidence type="ECO:0000305" key="6">
    <source>
    </source>
</evidence>
<feature type="chain" id="PRO_0000432980" description="Aconitate hydratase A">
    <location>
        <begin position="1"/>
        <end position="891"/>
    </location>
</feature>
<feature type="binding site" evidence="2">
    <location>
        <position position="435"/>
    </location>
    <ligand>
        <name>[4Fe-4S] cluster</name>
        <dbReference type="ChEBI" id="CHEBI:49883"/>
    </ligand>
</feature>
<feature type="binding site" evidence="2">
    <location>
        <position position="501"/>
    </location>
    <ligand>
        <name>[4Fe-4S] cluster</name>
        <dbReference type="ChEBI" id="CHEBI:49883"/>
    </ligand>
</feature>
<feature type="binding site" evidence="2">
    <location>
        <position position="504"/>
    </location>
    <ligand>
        <name>[4Fe-4S] cluster</name>
        <dbReference type="ChEBI" id="CHEBI:49883"/>
    </ligand>
</feature>
<sequence length="891" mass="97502">MSSTLREASKDTLQAKDKTYHYYSLPLAAKSLGDIARLPKSLKVLLENLLRWQDGESVTDEDIQALAGWLKNAHADREIAWRPARVLMQDFTGVPAVVDLAAMREAVKRLGGDTSKVNPLSPVDLVIDHSVTVDHFGDDDAFEENVRLEMERNHERYMFLKWGKQAFSRFSVVPPGTGICHQVNLEYLGKAVWSELQDGEWIAYPDSLVGTDSHTTMINGLGVLGWGVGGIEAEAAMLGQPVSMLIPDVVGFKLTGKLREGITATDLVLTVTQMLRKHGVVGKFVEFYGDGLDSLPLADRATIANMSPEYGATCGFFPIDAITLEYMRLSGRSDDLVELVETYAKAQGMWRNPGDEPVFTSTLELDMGDVEASLAGPKRPQDRVALGDVPKAFAASAELELNTAQRDRQPVDYTMNGQPYQLPDGAVVIAAITSCTNTSNPSVLMAAGLLAKKAVTLGLKRQPWVKASLAPGSKVVSDYLAQAKLTPYLDELGFNLVGYGCTTCIGNSGPLPEPIETAIKKGDLTVGAVLSGNRNFEGRIHPLVKTNWLASPPLVVAYALAGNMNINLATDPLGYDRKGDPVYLKDIWPSAQEIARAVELVSSDMFRKEYAEVFEGTEEWKSIQVESSDTYGWQSDSTYIRLSPFFDEMQAQPAPVKDIHGARILAMLGDSVTTDHISPAGSIKPDSPAGRYLQNHGVERKDFNSYGSRRGNHEVMMRGTFANIRIRNEMLPGVEGGMTRHLPGTEAMSIYDAAMLYQQEKTPLAVIAGKEYGSGSSRDWAAKGPRLLGIRVVIAESFERIHRSNLIGMGILPLEFPQGVTRKTLGLTGEEVIDIADLQNLRPGATIPVTLTRSDGSKETVPCRCRIDTATELTYYQNDGILHYVIRNMLN</sequence>
<reference key="1">
    <citation type="journal article" date="2001" name="Nature">
        <title>Complete genome sequence of Salmonella enterica serovar Typhimurium LT2.</title>
        <authorList>
            <person name="McClelland M."/>
            <person name="Sanderson K.E."/>
            <person name="Spieth J."/>
            <person name="Clifton S.W."/>
            <person name="Latreille P."/>
            <person name="Courtney L."/>
            <person name="Porwollik S."/>
            <person name="Ali J."/>
            <person name="Dante M."/>
            <person name="Du F."/>
            <person name="Hou S."/>
            <person name="Layman D."/>
            <person name="Leonard S."/>
            <person name="Nguyen C."/>
            <person name="Scott K."/>
            <person name="Holmes A."/>
            <person name="Grewal N."/>
            <person name="Mulvaney E."/>
            <person name="Ryan E."/>
            <person name="Sun H."/>
            <person name="Florea L."/>
            <person name="Miller W."/>
            <person name="Stoneking T."/>
            <person name="Nhan M."/>
            <person name="Waterston R."/>
            <person name="Wilson R.K."/>
        </authorList>
    </citation>
    <scope>NUCLEOTIDE SEQUENCE [LARGE SCALE GENOMIC DNA]</scope>
    <source>
        <strain>LT2 / SGSC1412 / ATCC 700720</strain>
    </source>
</reference>
<reference key="2">
    <citation type="journal article" date="2001" name="Biochemistry">
        <title>In vitro conversion of propionate to pyruvate by Salmonella enterica enzymes: 2-methylcitrate dehydratase (PrpD) and aconitase enzymes catalyze the conversion of 2-methylcitrate to 2-methylisocitrate.</title>
        <authorList>
            <person name="Horswill A.R."/>
            <person name="Escalante-Semerena J.C."/>
        </authorList>
    </citation>
    <scope>FUNCTION</scope>
    <scope>CATALYTIC ACTIVITY</scope>
    <scope>DISRUPTION PHENOTYPE</scope>
    <scope>SUBSTRATE SPECIFICITY</scope>
</reference>
<dbReference type="EC" id="4.2.1.3" evidence="3"/>
<dbReference type="EC" id="4.2.1.99" evidence="3"/>
<dbReference type="EMBL" id="AE006468">
    <property type="protein sequence ID" value="AAL20630.1"/>
    <property type="molecule type" value="Genomic_DNA"/>
</dbReference>
<dbReference type="RefSeq" id="NP_460671.1">
    <property type="nucleotide sequence ID" value="NC_003197.2"/>
</dbReference>
<dbReference type="RefSeq" id="WP_000099475.1">
    <property type="nucleotide sequence ID" value="NC_003197.2"/>
</dbReference>
<dbReference type="SMR" id="Q8ZP52"/>
<dbReference type="STRING" id="99287.STM1712"/>
<dbReference type="PaxDb" id="99287-STM1712"/>
<dbReference type="GeneID" id="1253231"/>
<dbReference type="KEGG" id="stm:STM1712"/>
<dbReference type="PATRIC" id="fig|99287.12.peg.1807"/>
<dbReference type="HOGENOM" id="CLU_013476_2_1_6"/>
<dbReference type="OMA" id="KWPETFG"/>
<dbReference type="PhylomeDB" id="Q8ZP52"/>
<dbReference type="BioCyc" id="MetaCyc:MONOMER-65"/>
<dbReference type="BioCyc" id="SENT99287:STM1712-MONOMER"/>
<dbReference type="UniPathway" id="UPA00223">
    <property type="reaction ID" value="UER00718"/>
</dbReference>
<dbReference type="UniPathway" id="UPA00946"/>
<dbReference type="Proteomes" id="UP000001014">
    <property type="component" value="Chromosome"/>
</dbReference>
<dbReference type="GO" id="GO:0005829">
    <property type="term" value="C:cytosol"/>
    <property type="evidence" value="ECO:0000318"/>
    <property type="project" value="GO_Central"/>
</dbReference>
<dbReference type="GO" id="GO:0047456">
    <property type="term" value="F:2-methylisocitrate dehydratase activity"/>
    <property type="evidence" value="ECO:0000314"/>
    <property type="project" value="UniProtKB"/>
</dbReference>
<dbReference type="GO" id="GO:0051539">
    <property type="term" value="F:4 iron, 4 sulfur cluster binding"/>
    <property type="evidence" value="ECO:0000250"/>
    <property type="project" value="UniProtKB"/>
</dbReference>
<dbReference type="GO" id="GO:0003994">
    <property type="term" value="F:aconitate hydratase activity"/>
    <property type="evidence" value="ECO:0000314"/>
    <property type="project" value="UniProtKB"/>
</dbReference>
<dbReference type="GO" id="GO:0030350">
    <property type="term" value="F:iron-responsive element binding"/>
    <property type="evidence" value="ECO:0000318"/>
    <property type="project" value="GO_Central"/>
</dbReference>
<dbReference type="GO" id="GO:0046872">
    <property type="term" value="F:metal ion binding"/>
    <property type="evidence" value="ECO:0007669"/>
    <property type="project" value="UniProtKB-KW"/>
</dbReference>
<dbReference type="GO" id="GO:0003730">
    <property type="term" value="F:mRNA 3'-UTR binding"/>
    <property type="evidence" value="ECO:0000250"/>
    <property type="project" value="UniProtKB"/>
</dbReference>
<dbReference type="GO" id="GO:0003729">
    <property type="term" value="F:mRNA binding"/>
    <property type="evidence" value="ECO:0000250"/>
    <property type="project" value="UniProtKB"/>
</dbReference>
<dbReference type="GO" id="GO:0019679">
    <property type="term" value="P:propionate metabolic process, methylcitrate cycle"/>
    <property type="evidence" value="ECO:0000314"/>
    <property type="project" value="UniProtKB"/>
</dbReference>
<dbReference type="GO" id="GO:0006099">
    <property type="term" value="P:tricarboxylic acid cycle"/>
    <property type="evidence" value="ECO:0000314"/>
    <property type="project" value="UniProtKB"/>
</dbReference>
<dbReference type="CDD" id="cd01586">
    <property type="entry name" value="AcnA_IRP"/>
    <property type="match status" value="1"/>
</dbReference>
<dbReference type="CDD" id="cd01580">
    <property type="entry name" value="AcnA_IRP_Swivel"/>
    <property type="match status" value="1"/>
</dbReference>
<dbReference type="FunFam" id="3.20.19.10:FF:000001">
    <property type="entry name" value="Aconitate hydratase"/>
    <property type="match status" value="1"/>
</dbReference>
<dbReference type="FunFam" id="3.30.499.10:FF:000002">
    <property type="entry name" value="Aconitate hydratase"/>
    <property type="match status" value="1"/>
</dbReference>
<dbReference type="FunFam" id="3.30.499.10:FF:000009">
    <property type="entry name" value="Aconitate hydratase"/>
    <property type="match status" value="1"/>
</dbReference>
<dbReference type="Gene3D" id="6.10.190.10">
    <property type="match status" value="1"/>
</dbReference>
<dbReference type="Gene3D" id="3.30.499.10">
    <property type="entry name" value="Aconitase, domain 3"/>
    <property type="match status" value="2"/>
</dbReference>
<dbReference type="Gene3D" id="3.20.19.10">
    <property type="entry name" value="Aconitase, domain 4"/>
    <property type="match status" value="1"/>
</dbReference>
<dbReference type="InterPro" id="IPR044137">
    <property type="entry name" value="AcnA_IRP_Swivel"/>
</dbReference>
<dbReference type="InterPro" id="IPR015931">
    <property type="entry name" value="Acnase/IPM_dHydase_lsu_aba_1/3"/>
</dbReference>
<dbReference type="InterPro" id="IPR001030">
    <property type="entry name" value="Acoase/IPM_deHydtase_lsu_aba"/>
</dbReference>
<dbReference type="InterPro" id="IPR015928">
    <property type="entry name" value="Aconitase/3IPM_dehydase_swvl"/>
</dbReference>
<dbReference type="InterPro" id="IPR006249">
    <property type="entry name" value="Aconitase/IRP2"/>
</dbReference>
<dbReference type="InterPro" id="IPR018136">
    <property type="entry name" value="Aconitase_4Fe-4S_BS"/>
</dbReference>
<dbReference type="InterPro" id="IPR036008">
    <property type="entry name" value="Aconitase_4Fe-4S_dom"/>
</dbReference>
<dbReference type="InterPro" id="IPR000573">
    <property type="entry name" value="AconitaseA/IPMdHydase_ssu_swvl"/>
</dbReference>
<dbReference type="NCBIfam" id="TIGR01341">
    <property type="entry name" value="aconitase_1"/>
    <property type="match status" value="1"/>
</dbReference>
<dbReference type="NCBIfam" id="NF006757">
    <property type="entry name" value="PRK09277.1"/>
    <property type="match status" value="1"/>
</dbReference>
<dbReference type="NCBIfam" id="NF009520">
    <property type="entry name" value="PRK12881.1"/>
    <property type="match status" value="1"/>
</dbReference>
<dbReference type="PANTHER" id="PTHR11670">
    <property type="entry name" value="ACONITASE/IRON-RESPONSIVE ELEMENT FAMILY MEMBER"/>
    <property type="match status" value="1"/>
</dbReference>
<dbReference type="Pfam" id="PF00330">
    <property type="entry name" value="Aconitase"/>
    <property type="match status" value="1"/>
</dbReference>
<dbReference type="Pfam" id="PF00694">
    <property type="entry name" value="Aconitase_C"/>
    <property type="match status" value="1"/>
</dbReference>
<dbReference type="PRINTS" id="PR00415">
    <property type="entry name" value="ACONITASE"/>
</dbReference>
<dbReference type="SUPFAM" id="SSF53732">
    <property type="entry name" value="Aconitase iron-sulfur domain"/>
    <property type="match status" value="1"/>
</dbReference>
<dbReference type="SUPFAM" id="SSF52016">
    <property type="entry name" value="LeuD/IlvD-like"/>
    <property type="match status" value="1"/>
</dbReference>
<dbReference type="PROSITE" id="PS00450">
    <property type="entry name" value="ACONITASE_1"/>
    <property type="match status" value="1"/>
</dbReference>
<dbReference type="PROSITE" id="PS01244">
    <property type="entry name" value="ACONITASE_2"/>
    <property type="match status" value="1"/>
</dbReference>
<organism>
    <name type="scientific">Salmonella typhimurium (strain LT2 / SGSC1412 / ATCC 700720)</name>
    <dbReference type="NCBI Taxonomy" id="99287"/>
    <lineage>
        <taxon>Bacteria</taxon>
        <taxon>Pseudomonadati</taxon>
        <taxon>Pseudomonadota</taxon>
        <taxon>Gammaproteobacteria</taxon>
        <taxon>Enterobacterales</taxon>
        <taxon>Enterobacteriaceae</taxon>
        <taxon>Salmonella</taxon>
    </lineage>
</organism>
<comment type="function">
    <text evidence="1 3">Involved in the catabolism of short chain fatty acids (SCFA) via the tricarboxylic acid (TCA)(acetyl degradation route) and the 2-methylcitrate cycle I (propionate degradation route). Catalyzes the reversible isomerization of citrate to isocitrate via cis-aconitate. Also catalyzes the hydration of 2-methyl-cis-aconitate to yield (2R,3S)-2-methylisocitrate. The (2S,3S)-2-methylcitrate (2-MC) is a very poor substrate (PubMed:11294638). The apo form of AcnA functions as a RNA-binding regulatory protein (By similarity).</text>
</comment>
<comment type="catalytic activity">
    <reaction evidence="3">
        <text>citrate = D-threo-isocitrate</text>
        <dbReference type="Rhea" id="RHEA:10336"/>
        <dbReference type="ChEBI" id="CHEBI:15562"/>
        <dbReference type="ChEBI" id="CHEBI:16947"/>
        <dbReference type="EC" id="4.2.1.3"/>
    </reaction>
</comment>
<comment type="catalytic activity">
    <reaction evidence="3">
        <text>(2S,3R)-3-hydroxybutane-1,2,3-tricarboxylate = 2-methyl-cis-aconitate + H2O</text>
        <dbReference type="Rhea" id="RHEA:17941"/>
        <dbReference type="ChEBI" id="CHEBI:15377"/>
        <dbReference type="ChEBI" id="CHEBI:57429"/>
        <dbReference type="ChEBI" id="CHEBI:57872"/>
        <dbReference type="EC" id="4.2.1.99"/>
    </reaction>
</comment>
<comment type="cofactor">
    <cofactor evidence="1">
        <name>[4Fe-4S] cluster</name>
        <dbReference type="ChEBI" id="CHEBI:49883"/>
    </cofactor>
    <text evidence="1">Binds 1 [4Fe-4S] cluster per subunit.</text>
</comment>
<comment type="pathway">
    <text evidence="6">Carbohydrate metabolism; tricarboxylic acid cycle; isocitrate from oxaloacetate: step 2/2.</text>
</comment>
<comment type="pathway">
    <text evidence="6">Organic acid metabolism; propanoate degradation.</text>
</comment>
<comment type="subunit">
    <text evidence="1">Monomer.</text>
</comment>
<comment type="disruption phenotype">
    <text evidence="3">Cells lacking this gene show no phenotype during growth on propionate, acetate, succinate, glycerol and glucose. The acnAB double mutant does not grow on propionate even when supplemented with glutamate and is unable to respire propionate under anaerobic growth conditions.</text>
</comment>
<comment type="similarity">
    <text evidence="5">Belongs to the aconitase/IPM isomerase family.</text>
</comment>
<keyword id="KW-0004">4Fe-4S</keyword>
<keyword id="KW-0408">Iron</keyword>
<keyword id="KW-0411">Iron-sulfur</keyword>
<keyword id="KW-0456">Lyase</keyword>
<keyword id="KW-0479">Metal-binding</keyword>
<keyword id="KW-1185">Reference proteome</keyword>
<keyword id="KW-0694">RNA-binding</keyword>
<keyword id="KW-0816">Tricarboxylic acid cycle</keyword>
<protein>
    <recommendedName>
        <fullName evidence="4">Aconitate hydratase A</fullName>
        <shortName evidence="4">ACN</shortName>
        <shortName evidence="4">Aconitase</shortName>
        <ecNumber evidence="3">4.2.1.3</ecNumber>
    </recommendedName>
    <alternativeName>
        <fullName evidence="6">(2R,3S)-2-methylisocitrate dehydratase</fullName>
    </alternativeName>
    <alternativeName>
        <fullName evidence="6">(2S,3R)-3-hydroxybutane-1,2,3-tricarboxylate dehydratase</fullName>
    </alternativeName>
    <alternativeName>
        <fullName evidence="4">2-methyl-cis-aconitate hydratase</fullName>
        <ecNumber evidence="3">4.2.1.99</ecNumber>
    </alternativeName>
    <alternativeName>
        <fullName evidence="1">Iron-responsive protein-like</fullName>
        <shortName evidence="1">IRP-like</shortName>
    </alternativeName>
    <alternativeName>
        <fullName evidence="1">RNA-binding protein</fullName>
    </alternativeName>
</protein>
<name>ACNA_SALTY</name>
<accession>Q8ZP52</accession>
<gene>
    <name type="primary">acnA</name>
    <name type="ordered locus">STM1712</name>
</gene>